<feature type="chain" id="PRO_1000012802" description="ATP-dependent protease ATPase subunit HslU">
    <location>
        <begin position="1"/>
        <end position="441"/>
    </location>
</feature>
<feature type="binding site" evidence="1">
    <location>
        <position position="18"/>
    </location>
    <ligand>
        <name>ATP</name>
        <dbReference type="ChEBI" id="CHEBI:30616"/>
    </ligand>
</feature>
<feature type="binding site" evidence="1">
    <location>
        <begin position="60"/>
        <end position="65"/>
    </location>
    <ligand>
        <name>ATP</name>
        <dbReference type="ChEBI" id="CHEBI:30616"/>
    </ligand>
</feature>
<feature type="binding site" evidence="1">
    <location>
        <position position="254"/>
    </location>
    <ligand>
        <name>ATP</name>
        <dbReference type="ChEBI" id="CHEBI:30616"/>
    </ligand>
</feature>
<feature type="binding site" evidence="1">
    <location>
        <position position="319"/>
    </location>
    <ligand>
        <name>ATP</name>
        <dbReference type="ChEBI" id="CHEBI:30616"/>
    </ligand>
</feature>
<feature type="binding site" evidence="1">
    <location>
        <position position="391"/>
    </location>
    <ligand>
        <name>ATP</name>
        <dbReference type="ChEBI" id="CHEBI:30616"/>
    </ligand>
</feature>
<organism>
    <name type="scientific">Shewanella denitrificans (strain OS217 / ATCC BAA-1090 / DSM 15013)</name>
    <dbReference type="NCBI Taxonomy" id="318161"/>
    <lineage>
        <taxon>Bacteria</taxon>
        <taxon>Pseudomonadati</taxon>
        <taxon>Pseudomonadota</taxon>
        <taxon>Gammaproteobacteria</taxon>
        <taxon>Alteromonadales</taxon>
        <taxon>Shewanellaceae</taxon>
        <taxon>Shewanella</taxon>
    </lineage>
</organism>
<accession>Q12IT8</accession>
<evidence type="ECO:0000255" key="1">
    <source>
        <dbReference type="HAMAP-Rule" id="MF_00249"/>
    </source>
</evidence>
<proteinExistence type="inferred from homology"/>
<dbReference type="EMBL" id="CP000302">
    <property type="protein sequence ID" value="ABE56638.1"/>
    <property type="molecule type" value="Genomic_DNA"/>
</dbReference>
<dbReference type="RefSeq" id="WP_011497780.1">
    <property type="nucleotide sequence ID" value="NC_007954.1"/>
</dbReference>
<dbReference type="SMR" id="Q12IT8"/>
<dbReference type="STRING" id="318161.Sden_3362"/>
<dbReference type="KEGG" id="sdn:Sden_3362"/>
<dbReference type="eggNOG" id="COG1220">
    <property type="taxonomic scope" value="Bacteria"/>
</dbReference>
<dbReference type="HOGENOM" id="CLU_033123_0_0_6"/>
<dbReference type="OrthoDB" id="9804062at2"/>
<dbReference type="Proteomes" id="UP000001982">
    <property type="component" value="Chromosome"/>
</dbReference>
<dbReference type="GO" id="GO:0009376">
    <property type="term" value="C:HslUV protease complex"/>
    <property type="evidence" value="ECO:0007669"/>
    <property type="project" value="UniProtKB-UniRule"/>
</dbReference>
<dbReference type="GO" id="GO:0005524">
    <property type="term" value="F:ATP binding"/>
    <property type="evidence" value="ECO:0007669"/>
    <property type="project" value="UniProtKB-UniRule"/>
</dbReference>
<dbReference type="GO" id="GO:0016887">
    <property type="term" value="F:ATP hydrolysis activity"/>
    <property type="evidence" value="ECO:0007669"/>
    <property type="project" value="InterPro"/>
</dbReference>
<dbReference type="GO" id="GO:0008233">
    <property type="term" value="F:peptidase activity"/>
    <property type="evidence" value="ECO:0007669"/>
    <property type="project" value="InterPro"/>
</dbReference>
<dbReference type="GO" id="GO:0036402">
    <property type="term" value="F:proteasome-activating activity"/>
    <property type="evidence" value="ECO:0007669"/>
    <property type="project" value="UniProtKB-UniRule"/>
</dbReference>
<dbReference type="GO" id="GO:0043335">
    <property type="term" value="P:protein unfolding"/>
    <property type="evidence" value="ECO:0007669"/>
    <property type="project" value="UniProtKB-UniRule"/>
</dbReference>
<dbReference type="GO" id="GO:0051603">
    <property type="term" value="P:proteolysis involved in protein catabolic process"/>
    <property type="evidence" value="ECO:0007669"/>
    <property type="project" value="TreeGrafter"/>
</dbReference>
<dbReference type="CDD" id="cd19498">
    <property type="entry name" value="RecA-like_HslU"/>
    <property type="match status" value="1"/>
</dbReference>
<dbReference type="FunFam" id="1.10.8.10:FF:000028">
    <property type="entry name" value="ATP-dependent protease ATPase subunit HslU"/>
    <property type="match status" value="1"/>
</dbReference>
<dbReference type="FunFam" id="1.10.8.60:FF:000027">
    <property type="entry name" value="ATP-dependent protease ATPase subunit HslU"/>
    <property type="match status" value="1"/>
</dbReference>
<dbReference type="FunFam" id="3.40.50.300:FF:000213">
    <property type="entry name" value="ATP-dependent protease ATPase subunit HslU"/>
    <property type="match status" value="1"/>
</dbReference>
<dbReference type="FunFam" id="3.40.50.300:FF:000220">
    <property type="entry name" value="ATP-dependent protease ATPase subunit HslU"/>
    <property type="match status" value="1"/>
</dbReference>
<dbReference type="Gene3D" id="1.10.8.60">
    <property type="match status" value="1"/>
</dbReference>
<dbReference type="Gene3D" id="1.10.8.10">
    <property type="entry name" value="DNA helicase RuvA subunit, C-terminal domain"/>
    <property type="match status" value="1"/>
</dbReference>
<dbReference type="Gene3D" id="3.40.50.300">
    <property type="entry name" value="P-loop containing nucleotide triphosphate hydrolases"/>
    <property type="match status" value="2"/>
</dbReference>
<dbReference type="HAMAP" id="MF_00249">
    <property type="entry name" value="HslU"/>
    <property type="match status" value="1"/>
</dbReference>
<dbReference type="InterPro" id="IPR003593">
    <property type="entry name" value="AAA+_ATPase"/>
</dbReference>
<dbReference type="InterPro" id="IPR050052">
    <property type="entry name" value="ATP-dep_Clp_protease_ClpX"/>
</dbReference>
<dbReference type="InterPro" id="IPR003959">
    <property type="entry name" value="ATPase_AAA_core"/>
</dbReference>
<dbReference type="InterPro" id="IPR019489">
    <property type="entry name" value="Clp_ATPase_C"/>
</dbReference>
<dbReference type="InterPro" id="IPR004491">
    <property type="entry name" value="HslU"/>
</dbReference>
<dbReference type="InterPro" id="IPR027417">
    <property type="entry name" value="P-loop_NTPase"/>
</dbReference>
<dbReference type="NCBIfam" id="TIGR00390">
    <property type="entry name" value="hslU"/>
    <property type="match status" value="1"/>
</dbReference>
<dbReference type="NCBIfam" id="NF003544">
    <property type="entry name" value="PRK05201.1"/>
    <property type="match status" value="1"/>
</dbReference>
<dbReference type="PANTHER" id="PTHR48102">
    <property type="entry name" value="ATP-DEPENDENT CLP PROTEASE ATP-BINDING SUBUNIT CLPX-LIKE, MITOCHONDRIAL-RELATED"/>
    <property type="match status" value="1"/>
</dbReference>
<dbReference type="PANTHER" id="PTHR48102:SF3">
    <property type="entry name" value="ATP-DEPENDENT PROTEASE ATPASE SUBUNIT HSLU"/>
    <property type="match status" value="1"/>
</dbReference>
<dbReference type="Pfam" id="PF00004">
    <property type="entry name" value="AAA"/>
    <property type="match status" value="1"/>
</dbReference>
<dbReference type="Pfam" id="PF07724">
    <property type="entry name" value="AAA_2"/>
    <property type="match status" value="1"/>
</dbReference>
<dbReference type="SMART" id="SM00382">
    <property type="entry name" value="AAA"/>
    <property type="match status" value="1"/>
</dbReference>
<dbReference type="SMART" id="SM01086">
    <property type="entry name" value="ClpB_D2-small"/>
    <property type="match status" value="1"/>
</dbReference>
<dbReference type="SUPFAM" id="SSF52540">
    <property type="entry name" value="P-loop containing nucleoside triphosphate hydrolases"/>
    <property type="match status" value="1"/>
</dbReference>
<reference key="1">
    <citation type="submission" date="2006-03" db="EMBL/GenBank/DDBJ databases">
        <title>Complete sequence of Shewanella denitrificans OS217.</title>
        <authorList>
            <consortium name="US DOE Joint Genome Institute"/>
            <person name="Copeland A."/>
            <person name="Lucas S."/>
            <person name="Lapidus A."/>
            <person name="Barry K."/>
            <person name="Detter J.C."/>
            <person name="Glavina del Rio T."/>
            <person name="Hammon N."/>
            <person name="Israni S."/>
            <person name="Dalin E."/>
            <person name="Tice H."/>
            <person name="Pitluck S."/>
            <person name="Brettin T."/>
            <person name="Bruce D."/>
            <person name="Han C."/>
            <person name="Tapia R."/>
            <person name="Gilna P."/>
            <person name="Kiss H."/>
            <person name="Schmutz J."/>
            <person name="Larimer F."/>
            <person name="Land M."/>
            <person name="Hauser L."/>
            <person name="Kyrpides N."/>
            <person name="Lykidis A."/>
            <person name="Richardson P."/>
        </authorList>
    </citation>
    <scope>NUCLEOTIDE SEQUENCE [LARGE SCALE GENOMIC DNA]</scope>
    <source>
        <strain>OS217 / ATCC BAA-1090 / DSM 15013</strain>
    </source>
</reference>
<keyword id="KW-0067">ATP-binding</keyword>
<keyword id="KW-0143">Chaperone</keyword>
<keyword id="KW-0963">Cytoplasm</keyword>
<keyword id="KW-0547">Nucleotide-binding</keyword>
<keyword id="KW-1185">Reference proteome</keyword>
<keyword id="KW-0346">Stress response</keyword>
<sequence>MSEMTPREIVHELDAHIIGQNKAKRAVAVALRNRWRRMQLAPDLRQEVTPKNILMIGPTGVGKTEIARRLAKLANAPFIKVEATKFTEVGYVGKEVEQIIRDLTDSAVKMTREQQMKKCRFRAEELAEERILDALLPKAKEDWDSEKKDDSGTRQIFRKKLREGQLDDKEIDIDIAAPQIGVEIMAPPGMEEMTNQLQGLFQNLGQSTSKRKKLKIKDAFKQLIEDEAAKLVNQEDLKEQAIDLVEQNGIVFLDEIDKICKRGETSGPDVSREGVQRDLLPLVEGCTVSTKHGMVKTDHILFIASGAFQMSKPSDLIPELQGRLPIRVELDPLTANDFKRILTEPNASLTEQYIALMATEGVTISFLESGIDKLAEAAWQVNERTENIGARRLHTVMEKLMEDISFDASDKSGSAFVIDADYVTEHLDTLVQDEDLSRFIL</sequence>
<protein>
    <recommendedName>
        <fullName evidence="1">ATP-dependent protease ATPase subunit HslU</fullName>
    </recommendedName>
    <alternativeName>
        <fullName evidence="1">Unfoldase HslU</fullName>
    </alternativeName>
</protein>
<name>HSLU_SHEDO</name>
<gene>
    <name evidence="1" type="primary">hslU</name>
    <name type="ordered locus">Sden_3362</name>
</gene>
<comment type="function">
    <text evidence="1">ATPase subunit of a proteasome-like degradation complex; this subunit has chaperone activity. The binding of ATP and its subsequent hydrolysis by HslU are essential for unfolding of protein substrates subsequently hydrolyzed by HslV. HslU recognizes the N-terminal part of its protein substrates and unfolds these before they are guided to HslV for hydrolysis.</text>
</comment>
<comment type="subunit">
    <text evidence="1">A double ring-shaped homohexamer of HslV is capped on each side by a ring-shaped HslU homohexamer. The assembly of the HslU/HslV complex is dependent on binding of ATP.</text>
</comment>
<comment type="subcellular location">
    <subcellularLocation>
        <location evidence="1">Cytoplasm</location>
    </subcellularLocation>
</comment>
<comment type="similarity">
    <text evidence="1">Belongs to the ClpX chaperone family. HslU subfamily.</text>
</comment>